<evidence type="ECO:0000255" key="1">
    <source>
        <dbReference type="HAMAP-Rule" id="MF_01184"/>
    </source>
</evidence>
<comment type="function">
    <text evidence="1">Converts the preformed base xanthine, a product of nucleic acid breakdown, to xanthosine 5'-monophosphate (XMP), so it can be reused for RNA or DNA synthesis.</text>
</comment>
<comment type="catalytic activity">
    <reaction evidence="1">
        <text>XMP + diphosphate = xanthine + 5-phospho-alpha-D-ribose 1-diphosphate</text>
        <dbReference type="Rhea" id="RHEA:10800"/>
        <dbReference type="ChEBI" id="CHEBI:17712"/>
        <dbReference type="ChEBI" id="CHEBI:33019"/>
        <dbReference type="ChEBI" id="CHEBI:57464"/>
        <dbReference type="ChEBI" id="CHEBI:58017"/>
        <dbReference type="EC" id="2.4.2.22"/>
    </reaction>
</comment>
<comment type="pathway">
    <text evidence="1">Purine metabolism; XMP biosynthesis via salvage pathway; XMP from xanthine: step 1/1.</text>
</comment>
<comment type="subunit">
    <text evidence="1">Homodimer.</text>
</comment>
<comment type="subcellular location">
    <subcellularLocation>
        <location evidence="1">Cytoplasm</location>
    </subcellularLocation>
</comment>
<comment type="similarity">
    <text evidence="1">Belongs to the purine/pyrimidine phosphoribosyltransferase family. Xpt subfamily.</text>
</comment>
<accession>B5XLI3</accession>
<keyword id="KW-0963">Cytoplasm</keyword>
<keyword id="KW-0328">Glycosyltransferase</keyword>
<keyword id="KW-0660">Purine salvage</keyword>
<keyword id="KW-0808">Transferase</keyword>
<dbReference type="EC" id="2.4.2.22" evidence="1"/>
<dbReference type="EMBL" id="CP000829">
    <property type="protein sequence ID" value="ACI61195.1"/>
    <property type="molecule type" value="Genomic_DNA"/>
</dbReference>
<dbReference type="SMR" id="B5XLI3"/>
<dbReference type="KEGG" id="soz:Spy49_0887"/>
<dbReference type="HOGENOM" id="CLU_099015_0_0_9"/>
<dbReference type="UniPathway" id="UPA00602">
    <property type="reaction ID" value="UER00658"/>
</dbReference>
<dbReference type="Proteomes" id="UP000001039">
    <property type="component" value="Chromosome"/>
</dbReference>
<dbReference type="GO" id="GO:0005737">
    <property type="term" value="C:cytoplasm"/>
    <property type="evidence" value="ECO:0007669"/>
    <property type="project" value="UniProtKB-SubCell"/>
</dbReference>
<dbReference type="GO" id="GO:0000310">
    <property type="term" value="F:xanthine phosphoribosyltransferase activity"/>
    <property type="evidence" value="ECO:0007669"/>
    <property type="project" value="UniProtKB-UniRule"/>
</dbReference>
<dbReference type="GO" id="GO:0006166">
    <property type="term" value="P:purine ribonucleoside salvage"/>
    <property type="evidence" value="ECO:0007669"/>
    <property type="project" value="UniProtKB-KW"/>
</dbReference>
<dbReference type="GO" id="GO:0046110">
    <property type="term" value="P:xanthine metabolic process"/>
    <property type="evidence" value="ECO:0007669"/>
    <property type="project" value="InterPro"/>
</dbReference>
<dbReference type="GO" id="GO:0032265">
    <property type="term" value="P:XMP salvage"/>
    <property type="evidence" value="ECO:0007669"/>
    <property type="project" value="UniProtKB-UniRule"/>
</dbReference>
<dbReference type="CDD" id="cd06223">
    <property type="entry name" value="PRTases_typeI"/>
    <property type="match status" value="1"/>
</dbReference>
<dbReference type="Gene3D" id="3.40.50.2020">
    <property type="match status" value="1"/>
</dbReference>
<dbReference type="HAMAP" id="MF_01184">
    <property type="entry name" value="XPRTase"/>
    <property type="match status" value="1"/>
</dbReference>
<dbReference type="InterPro" id="IPR000836">
    <property type="entry name" value="PRibTrfase_dom"/>
</dbReference>
<dbReference type="InterPro" id="IPR029057">
    <property type="entry name" value="PRTase-like"/>
</dbReference>
<dbReference type="InterPro" id="IPR050118">
    <property type="entry name" value="Pur/Pyrimidine_PRTase"/>
</dbReference>
<dbReference type="InterPro" id="IPR010079">
    <property type="entry name" value="Xanthine_PRibTrfase"/>
</dbReference>
<dbReference type="NCBIfam" id="NF006671">
    <property type="entry name" value="PRK09219.1"/>
    <property type="match status" value="1"/>
</dbReference>
<dbReference type="NCBIfam" id="TIGR01744">
    <property type="entry name" value="XPRTase"/>
    <property type="match status" value="1"/>
</dbReference>
<dbReference type="PANTHER" id="PTHR43864">
    <property type="entry name" value="HYPOXANTHINE/GUANINE PHOSPHORIBOSYLTRANSFERASE"/>
    <property type="match status" value="1"/>
</dbReference>
<dbReference type="PANTHER" id="PTHR43864:SF1">
    <property type="entry name" value="XANTHINE PHOSPHORIBOSYLTRANSFERASE"/>
    <property type="match status" value="1"/>
</dbReference>
<dbReference type="Pfam" id="PF00156">
    <property type="entry name" value="Pribosyltran"/>
    <property type="match status" value="1"/>
</dbReference>
<dbReference type="SUPFAM" id="SSF53271">
    <property type="entry name" value="PRTase-like"/>
    <property type="match status" value="1"/>
</dbReference>
<sequence>MQLLEERILTDGNILGENILKVDNFLTHQVDYRSMKAIGKVFAQKYAEAGITKVVTIEASGIAPAVYAAEAMDVPMIFAKKHKNITMTEGILTAEVYSFTKQVTSTVSIAGKFLSKEDKVLIIDDFLANGQAAKGLIEIIGQAGAQVVGVGIVIEKSFQDGRRLIEDMGIEVTSLARIKNFENGNLNFLEADA</sequence>
<reference key="1">
    <citation type="journal article" date="2008" name="J. Bacteriol.">
        <title>Genome sequence of a nephritogenic and highly transformable M49 strain of Streptococcus pyogenes.</title>
        <authorList>
            <person name="McShan W.M."/>
            <person name="Ferretti J.J."/>
            <person name="Karasawa T."/>
            <person name="Suvorov A.N."/>
            <person name="Lin S."/>
            <person name="Qin B."/>
            <person name="Jia H."/>
            <person name="Kenton S."/>
            <person name="Najar F."/>
            <person name="Wu H."/>
            <person name="Scott J."/>
            <person name="Roe B.A."/>
            <person name="Savic D.J."/>
        </authorList>
    </citation>
    <scope>NUCLEOTIDE SEQUENCE [LARGE SCALE GENOMIC DNA]</scope>
    <source>
        <strain>NZ131</strain>
    </source>
</reference>
<gene>
    <name evidence="1" type="primary">xpt</name>
    <name type="ordered locus">Spy49_0887</name>
</gene>
<proteinExistence type="inferred from homology"/>
<feature type="chain" id="PRO_1000138246" description="Xanthine phosphoribosyltransferase">
    <location>
        <begin position="1"/>
        <end position="193"/>
    </location>
</feature>
<feature type="binding site" evidence="1">
    <location>
        <position position="20"/>
    </location>
    <ligand>
        <name>xanthine</name>
        <dbReference type="ChEBI" id="CHEBI:17712"/>
    </ligand>
</feature>
<feature type="binding site" evidence="1">
    <location>
        <position position="27"/>
    </location>
    <ligand>
        <name>xanthine</name>
        <dbReference type="ChEBI" id="CHEBI:17712"/>
    </ligand>
</feature>
<feature type="binding site" evidence="1">
    <location>
        <begin position="128"/>
        <end position="132"/>
    </location>
    <ligand>
        <name>5-phospho-alpha-D-ribose 1-diphosphate</name>
        <dbReference type="ChEBI" id="CHEBI:58017"/>
    </ligand>
</feature>
<feature type="binding site" evidence="1">
    <location>
        <position position="156"/>
    </location>
    <ligand>
        <name>xanthine</name>
        <dbReference type="ChEBI" id="CHEBI:17712"/>
    </ligand>
</feature>
<organism>
    <name type="scientific">Streptococcus pyogenes serotype M49 (strain NZ131)</name>
    <dbReference type="NCBI Taxonomy" id="471876"/>
    <lineage>
        <taxon>Bacteria</taxon>
        <taxon>Bacillati</taxon>
        <taxon>Bacillota</taxon>
        <taxon>Bacilli</taxon>
        <taxon>Lactobacillales</taxon>
        <taxon>Streptococcaceae</taxon>
        <taxon>Streptococcus</taxon>
    </lineage>
</organism>
<protein>
    <recommendedName>
        <fullName evidence="1">Xanthine phosphoribosyltransferase</fullName>
        <shortName evidence="1">XPRTase</shortName>
        <ecNumber evidence="1">2.4.2.22</ecNumber>
    </recommendedName>
</protein>
<name>XPT_STRPZ</name>